<name>HPF_STAHJ</name>
<evidence type="ECO:0000255" key="1">
    <source>
        <dbReference type="HAMAP-Rule" id="MF_00839"/>
    </source>
</evidence>
<evidence type="ECO:0000256" key="2">
    <source>
        <dbReference type="SAM" id="MobiDB-lite"/>
    </source>
</evidence>
<proteinExistence type="inferred from homology"/>
<feature type="chain" id="PRO_0000291323" description="Ribosome hibernation promotion factor">
    <location>
        <begin position="1"/>
        <end position="192"/>
    </location>
</feature>
<feature type="region of interest" description="Disordered" evidence="2">
    <location>
        <begin position="95"/>
        <end position="129"/>
    </location>
</feature>
<feature type="compositionally biased region" description="Acidic residues" evidence="2">
    <location>
        <begin position="120"/>
        <end position="129"/>
    </location>
</feature>
<protein>
    <recommendedName>
        <fullName evidence="1">Ribosome hibernation promotion factor</fullName>
        <shortName evidence="1">HPF</shortName>
    </recommendedName>
</protein>
<reference key="1">
    <citation type="journal article" date="2005" name="J. Bacteriol.">
        <title>Whole-genome sequencing of Staphylococcus haemolyticus uncovers the extreme plasticity of its genome and the evolution of human-colonizing staphylococcal species.</title>
        <authorList>
            <person name="Takeuchi F."/>
            <person name="Watanabe S."/>
            <person name="Baba T."/>
            <person name="Yuzawa H."/>
            <person name="Ito T."/>
            <person name="Morimoto Y."/>
            <person name="Kuroda M."/>
            <person name="Cui L."/>
            <person name="Takahashi M."/>
            <person name="Ankai A."/>
            <person name="Baba S."/>
            <person name="Fukui S."/>
            <person name="Lee J.C."/>
            <person name="Hiramatsu K."/>
        </authorList>
    </citation>
    <scope>NUCLEOTIDE SEQUENCE [LARGE SCALE GENOMIC DNA]</scope>
    <source>
        <strain>JCSC1435</strain>
    </source>
</reference>
<comment type="function">
    <text evidence="1">Required for dimerization of active 70S ribosomes into 100S ribosomes in stationary phase; 100S ribosomes are translationally inactive and sometimes present during exponential growth.</text>
</comment>
<comment type="subunit">
    <text evidence="1">Interacts with 100S ribosomes.</text>
</comment>
<comment type="subcellular location">
    <subcellularLocation>
        <location evidence="1">Cytoplasm</location>
    </subcellularLocation>
</comment>
<comment type="similarity">
    <text evidence="1">Belongs to the HPF/YfiA ribosome-associated protein family. Long HPF subfamily.</text>
</comment>
<accession>Q4L4H7</accession>
<dbReference type="EMBL" id="AP006716">
    <property type="protein sequence ID" value="BAE05448.1"/>
    <property type="molecule type" value="Genomic_DNA"/>
</dbReference>
<dbReference type="RefSeq" id="WP_011276401.1">
    <property type="nucleotide sequence ID" value="NC_007168.1"/>
</dbReference>
<dbReference type="SMR" id="Q4L4H7"/>
<dbReference type="KEGG" id="sha:SH2139"/>
<dbReference type="eggNOG" id="COG1544">
    <property type="taxonomic scope" value="Bacteria"/>
</dbReference>
<dbReference type="HOGENOM" id="CLU_071472_0_3_9"/>
<dbReference type="OrthoDB" id="9794975at2"/>
<dbReference type="Proteomes" id="UP000000543">
    <property type="component" value="Chromosome"/>
</dbReference>
<dbReference type="GO" id="GO:0022627">
    <property type="term" value="C:cytosolic small ribosomal subunit"/>
    <property type="evidence" value="ECO:0007669"/>
    <property type="project" value="TreeGrafter"/>
</dbReference>
<dbReference type="GO" id="GO:0043024">
    <property type="term" value="F:ribosomal small subunit binding"/>
    <property type="evidence" value="ECO:0007669"/>
    <property type="project" value="TreeGrafter"/>
</dbReference>
<dbReference type="GO" id="GO:0045900">
    <property type="term" value="P:negative regulation of translational elongation"/>
    <property type="evidence" value="ECO:0007669"/>
    <property type="project" value="TreeGrafter"/>
</dbReference>
<dbReference type="CDD" id="cd00552">
    <property type="entry name" value="RaiA"/>
    <property type="match status" value="1"/>
</dbReference>
<dbReference type="FunFam" id="3.30.505.50:FF:000001">
    <property type="entry name" value="Ribosome hibernation promoting factor"/>
    <property type="match status" value="1"/>
</dbReference>
<dbReference type="Gene3D" id="3.30.160.100">
    <property type="entry name" value="Ribosome hibernation promotion factor-like"/>
    <property type="match status" value="1"/>
</dbReference>
<dbReference type="Gene3D" id="3.30.505.50">
    <property type="entry name" value="Sigma 54 modulation/S30EA ribosomal protein, C-terminal domain"/>
    <property type="match status" value="1"/>
</dbReference>
<dbReference type="HAMAP" id="MF_00839">
    <property type="entry name" value="HPF"/>
    <property type="match status" value="1"/>
</dbReference>
<dbReference type="InterPro" id="IPR050574">
    <property type="entry name" value="HPF/YfiA_ribosome-assoc"/>
</dbReference>
<dbReference type="InterPro" id="IPR034694">
    <property type="entry name" value="HPF_long/plastid"/>
</dbReference>
<dbReference type="InterPro" id="IPR036567">
    <property type="entry name" value="RHF-like"/>
</dbReference>
<dbReference type="InterPro" id="IPR003489">
    <property type="entry name" value="RHF/RaiA"/>
</dbReference>
<dbReference type="InterPro" id="IPR032528">
    <property type="entry name" value="Ribosom_S30AE_C"/>
</dbReference>
<dbReference type="InterPro" id="IPR038416">
    <property type="entry name" value="Ribosom_S30AE_C_sf"/>
</dbReference>
<dbReference type="NCBIfam" id="TIGR00741">
    <property type="entry name" value="yfiA"/>
    <property type="match status" value="1"/>
</dbReference>
<dbReference type="PANTHER" id="PTHR33231">
    <property type="entry name" value="30S RIBOSOMAL PROTEIN"/>
    <property type="match status" value="1"/>
</dbReference>
<dbReference type="PANTHER" id="PTHR33231:SF1">
    <property type="entry name" value="30S RIBOSOMAL PROTEIN"/>
    <property type="match status" value="1"/>
</dbReference>
<dbReference type="Pfam" id="PF16321">
    <property type="entry name" value="Ribosom_S30AE_C"/>
    <property type="match status" value="1"/>
</dbReference>
<dbReference type="Pfam" id="PF02482">
    <property type="entry name" value="Ribosomal_S30AE"/>
    <property type="match status" value="1"/>
</dbReference>
<dbReference type="SUPFAM" id="SSF69754">
    <property type="entry name" value="Ribosome binding protein Y (YfiA homologue)"/>
    <property type="match status" value="1"/>
</dbReference>
<keyword id="KW-0963">Cytoplasm</keyword>
<keyword id="KW-0810">Translation regulation</keyword>
<sequence>MIRFEIHGDNLTITDAIRNYIEDKIGKLERYFNDVPNAVAHVKVKTYQNSTTKIEVTIPLKNVTLRAEERHDDLYAGIDLVTSKLERQVRKYKTRVNRKHKTHGEPEAFVAEVQEAPPENVDDVNAEPTNDSEIEIIRSKQFSLKPMDSEEAVLQMELLGHDFYIFTDRETDGTSIVYKRKDGKYGLIETTE</sequence>
<gene>
    <name evidence="1" type="primary">hpf</name>
    <name type="ordered locus">SH2139</name>
</gene>
<organism>
    <name type="scientific">Staphylococcus haemolyticus (strain JCSC1435)</name>
    <dbReference type="NCBI Taxonomy" id="279808"/>
    <lineage>
        <taxon>Bacteria</taxon>
        <taxon>Bacillati</taxon>
        <taxon>Bacillota</taxon>
        <taxon>Bacilli</taxon>
        <taxon>Bacillales</taxon>
        <taxon>Staphylococcaceae</taxon>
        <taxon>Staphylococcus</taxon>
    </lineage>
</organism>